<proteinExistence type="inferred from homology"/>
<name>METK_MYCTO</name>
<sequence length="403" mass="43047">MSEKGRLFTSESVTEGHPDKICDAISDSVLDALLAADPRSRVAVETLVTTGQVHVVGEVTTSAKEAFADITNTVRARILEIGYDSSDKGFDGATCGVNIGIGAQSPDIAQGVDTAHEARVEGAADPLDSQGAGDQGLMFGYAINATPELMPLPIALAHRLSRRLTEVRKNGVLPYLRPDGKTQVTIAYEDNVPVRLDTVVISTQHAADIDLEKTLDPDIREKVLNTVLDDLAHETLDASTVRVLVNPTGKFVLGGPMGDAGLTGRKIIVDTYGGWARHGGGAFSGKDPSKVDRSAAYAMRWVAKNVVAAGLAERVEVQVAYAIGKAAPVGLFVETFGTETEDPVKIEKAIGEVFDLRPGAIIRDLNLLRPIYAPTAAYGHFGRTDVELPWEQLDKVDDLKRAI</sequence>
<comment type="function">
    <text evidence="1">Catalyzes the formation of S-adenosylmethionine (AdoMet) from methionine and ATP. The overall synthetic reaction is composed of two sequential steps, AdoMet formation and the subsequent tripolyphosphate hydrolysis which occurs prior to release of AdoMet from the enzyme.</text>
</comment>
<comment type="catalytic activity">
    <reaction evidence="1">
        <text>L-methionine + ATP + H2O = S-adenosyl-L-methionine + phosphate + diphosphate</text>
        <dbReference type="Rhea" id="RHEA:21080"/>
        <dbReference type="ChEBI" id="CHEBI:15377"/>
        <dbReference type="ChEBI" id="CHEBI:30616"/>
        <dbReference type="ChEBI" id="CHEBI:33019"/>
        <dbReference type="ChEBI" id="CHEBI:43474"/>
        <dbReference type="ChEBI" id="CHEBI:57844"/>
        <dbReference type="ChEBI" id="CHEBI:59789"/>
        <dbReference type="EC" id="2.5.1.6"/>
    </reaction>
</comment>
<comment type="cofactor">
    <cofactor evidence="1">
        <name>Mg(2+)</name>
        <dbReference type="ChEBI" id="CHEBI:18420"/>
    </cofactor>
    <text evidence="1">Binds 2 divalent ions per subunit.</text>
</comment>
<comment type="cofactor">
    <cofactor evidence="1">
        <name>K(+)</name>
        <dbReference type="ChEBI" id="CHEBI:29103"/>
    </cofactor>
    <text evidence="1">Binds 1 potassium ion per subunit.</text>
</comment>
<comment type="pathway">
    <text evidence="1">Amino-acid biosynthesis; S-adenosyl-L-methionine biosynthesis; S-adenosyl-L-methionine from L-methionine: step 1/1.</text>
</comment>
<comment type="subunit">
    <text evidence="1">Homotetramer; dimer of dimers.</text>
</comment>
<comment type="subcellular location">
    <subcellularLocation>
        <location evidence="1">Cytoplasm</location>
    </subcellularLocation>
</comment>
<comment type="similarity">
    <text evidence="1">Belongs to the AdoMet synthase family.</text>
</comment>
<comment type="sequence caution" evidence="2">
    <conflict type="erroneous initiation">
        <sequence resource="EMBL-CDS" id="AAK45702"/>
    </conflict>
</comment>
<feature type="chain" id="PRO_0000428298" description="S-adenosylmethionine synthase">
    <location>
        <begin position="1"/>
        <end position="403"/>
    </location>
</feature>
<feature type="region of interest" description="Flexible loop" evidence="1">
    <location>
        <begin position="104"/>
        <end position="114"/>
    </location>
</feature>
<feature type="binding site" description="in other chain" evidence="1">
    <location>
        <position position="17"/>
    </location>
    <ligand>
        <name>ATP</name>
        <dbReference type="ChEBI" id="CHEBI:30616"/>
        <note>ligand shared between two neighboring subunits</note>
    </ligand>
</feature>
<feature type="binding site" evidence="1">
    <location>
        <position position="19"/>
    </location>
    <ligand>
        <name>Mg(2+)</name>
        <dbReference type="ChEBI" id="CHEBI:18420"/>
    </ligand>
</feature>
<feature type="binding site" evidence="1">
    <location>
        <position position="45"/>
    </location>
    <ligand>
        <name>K(+)</name>
        <dbReference type="ChEBI" id="CHEBI:29103"/>
    </ligand>
</feature>
<feature type="binding site" description="in other chain" evidence="1">
    <location>
        <position position="58"/>
    </location>
    <ligand>
        <name>L-methionine</name>
        <dbReference type="ChEBI" id="CHEBI:57844"/>
        <note>ligand shared between two neighboring subunits</note>
    </ligand>
</feature>
<feature type="binding site" description="in other chain" evidence="1">
    <location>
        <position position="104"/>
    </location>
    <ligand>
        <name>L-methionine</name>
        <dbReference type="ChEBI" id="CHEBI:57844"/>
        <note>ligand shared between two neighboring subunits</note>
    </ligand>
</feature>
<feature type="binding site" description="in other chain" evidence="1">
    <location>
        <begin position="179"/>
        <end position="181"/>
    </location>
    <ligand>
        <name>ATP</name>
        <dbReference type="ChEBI" id="CHEBI:30616"/>
        <note>ligand shared between two neighboring subunits</note>
    </ligand>
</feature>
<feature type="binding site" description="in other chain" evidence="1">
    <location>
        <begin position="250"/>
        <end position="251"/>
    </location>
    <ligand>
        <name>ATP</name>
        <dbReference type="ChEBI" id="CHEBI:30616"/>
        <note>ligand shared between two neighboring subunits</note>
    </ligand>
</feature>
<feature type="binding site" evidence="1">
    <location>
        <position position="259"/>
    </location>
    <ligand>
        <name>ATP</name>
        <dbReference type="ChEBI" id="CHEBI:30616"/>
        <note>ligand shared between two neighboring subunits</note>
    </ligand>
</feature>
<feature type="binding site" evidence="1">
    <location>
        <position position="259"/>
    </location>
    <ligand>
        <name>L-methionine</name>
        <dbReference type="ChEBI" id="CHEBI:57844"/>
        <note>ligand shared between two neighboring subunits</note>
    </ligand>
</feature>
<feature type="binding site" description="in other chain" evidence="1">
    <location>
        <begin position="265"/>
        <end position="266"/>
    </location>
    <ligand>
        <name>ATP</name>
        <dbReference type="ChEBI" id="CHEBI:30616"/>
        <note>ligand shared between two neighboring subunits</note>
    </ligand>
</feature>
<feature type="binding site" evidence="1">
    <location>
        <position position="282"/>
    </location>
    <ligand>
        <name>ATP</name>
        <dbReference type="ChEBI" id="CHEBI:30616"/>
        <note>ligand shared between two neighboring subunits</note>
    </ligand>
</feature>
<feature type="binding site" evidence="1">
    <location>
        <position position="286"/>
    </location>
    <ligand>
        <name>ATP</name>
        <dbReference type="ChEBI" id="CHEBI:30616"/>
        <note>ligand shared between two neighboring subunits</note>
    </ligand>
</feature>
<feature type="binding site" description="in other chain" evidence="1">
    <location>
        <position position="290"/>
    </location>
    <ligand>
        <name>L-methionine</name>
        <dbReference type="ChEBI" id="CHEBI:57844"/>
        <note>ligand shared between two neighboring subunits</note>
    </ligand>
</feature>
<gene>
    <name evidence="1" type="primary">metK</name>
    <name type="ordered locus">MT1437</name>
</gene>
<organism>
    <name type="scientific">Mycobacterium tuberculosis (strain CDC 1551 / Oshkosh)</name>
    <dbReference type="NCBI Taxonomy" id="83331"/>
    <lineage>
        <taxon>Bacteria</taxon>
        <taxon>Bacillati</taxon>
        <taxon>Actinomycetota</taxon>
        <taxon>Actinomycetes</taxon>
        <taxon>Mycobacteriales</taxon>
        <taxon>Mycobacteriaceae</taxon>
        <taxon>Mycobacterium</taxon>
        <taxon>Mycobacterium tuberculosis complex</taxon>
    </lineage>
</organism>
<dbReference type="EC" id="2.5.1.6" evidence="1"/>
<dbReference type="EMBL" id="AE000516">
    <property type="protein sequence ID" value="AAK45702.1"/>
    <property type="status" value="ALT_INIT"/>
    <property type="molecule type" value="Genomic_DNA"/>
</dbReference>
<dbReference type="PIR" id="F70899">
    <property type="entry name" value="F70899"/>
</dbReference>
<dbReference type="RefSeq" id="WP_003900333.1">
    <property type="nucleotide sequence ID" value="NZ_KK341227.1"/>
</dbReference>
<dbReference type="SMR" id="P9WGV0"/>
<dbReference type="KEGG" id="mtc:MT1437"/>
<dbReference type="PATRIC" id="fig|83331.31.peg.1543"/>
<dbReference type="HOGENOM" id="CLU_041802_1_1_11"/>
<dbReference type="UniPathway" id="UPA00315">
    <property type="reaction ID" value="UER00080"/>
</dbReference>
<dbReference type="Proteomes" id="UP000001020">
    <property type="component" value="Chromosome"/>
</dbReference>
<dbReference type="GO" id="GO:0005737">
    <property type="term" value="C:cytoplasm"/>
    <property type="evidence" value="ECO:0007669"/>
    <property type="project" value="UniProtKB-SubCell"/>
</dbReference>
<dbReference type="GO" id="GO:0005524">
    <property type="term" value="F:ATP binding"/>
    <property type="evidence" value="ECO:0007669"/>
    <property type="project" value="UniProtKB-UniRule"/>
</dbReference>
<dbReference type="GO" id="GO:0000287">
    <property type="term" value="F:magnesium ion binding"/>
    <property type="evidence" value="ECO:0007669"/>
    <property type="project" value="UniProtKB-UniRule"/>
</dbReference>
<dbReference type="GO" id="GO:0004478">
    <property type="term" value="F:methionine adenosyltransferase activity"/>
    <property type="evidence" value="ECO:0007669"/>
    <property type="project" value="UniProtKB-UniRule"/>
</dbReference>
<dbReference type="GO" id="GO:0006730">
    <property type="term" value="P:one-carbon metabolic process"/>
    <property type="evidence" value="ECO:0007669"/>
    <property type="project" value="UniProtKB-KW"/>
</dbReference>
<dbReference type="GO" id="GO:0006556">
    <property type="term" value="P:S-adenosylmethionine biosynthetic process"/>
    <property type="evidence" value="ECO:0007669"/>
    <property type="project" value="UniProtKB-UniRule"/>
</dbReference>
<dbReference type="CDD" id="cd18079">
    <property type="entry name" value="S-AdoMet_synt"/>
    <property type="match status" value="1"/>
</dbReference>
<dbReference type="FunFam" id="3.30.300.10:FF:000006">
    <property type="entry name" value="S-adenosylmethionine synthase"/>
    <property type="match status" value="1"/>
</dbReference>
<dbReference type="Gene3D" id="3.30.300.10">
    <property type="match status" value="3"/>
</dbReference>
<dbReference type="HAMAP" id="MF_00086">
    <property type="entry name" value="S_AdoMet_synth1"/>
    <property type="match status" value="1"/>
</dbReference>
<dbReference type="InterPro" id="IPR022631">
    <property type="entry name" value="ADOMET_SYNTHASE_CS"/>
</dbReference>
<dbReference type="InterPro" id="IPR022630">
    <property type="entry name" value="S-AdoMet_synt_C"/>
</dbReference>
<dbReference type="InterPro" id="IPR022629">
    <property type="entry name" value="S-AdoMet_synt_central"/>
</dbReference>
<dbReference type="InterPro" id="IPR022628">
    <property type="entry name" value="S-AdoMet_synt_N"/>
</dbReference>
<dbReference type="InterPro" id="IPR002133">
    <property type="entry name" value="S-AdoMet_synthetase"/>
</dbReference>
<dbReference type="InterPro" id="IPR022636">
    <property type="entry name" value="S-AdoMet_synthetase_sfam"/>
</dbReference>
<dbReference type="NCBIfam" id="TIGR01034">
    <property type="entry name" value="metK"/>
    <property type="match status" value="1"/>
</dbReference>
<dbReference type="PANTHER" id="PTHR11964">
    <property type="entry name" value="S-ADENOSYLMETHIONINE SYNTHETASE"/>
    <property type="match status" value="1"/>
</dbReference>
<dbReference type="Pfam" id="PF02773">
    <property type="entry name" value="S-AdoMet_synt_C"/>
    <property type="match status" value="1"/>
</dbReference>
<dbReference type="Pfam" id="PF02772">
    <property type="entry name" value="S-AdoMet_synt_M"/>
    <property type="match status" value="1"/>
</dbReference>
<dbReference type="Pfam" id="PF00438">
    <property type="entry name" value="S-AdoMet_synt_N"/>
    <property type="match status" value="1"/>
</dbReference>
<dbReference type="PIRSF" id="PIRSF000497">
    <property type="entry name" value="MAT"/>
    <property type="match status" value="1"/>
</dbReference>
<dbReference type="SUPFAM" id="SSF55973">
    <property type="entry name" value="S-adenosylmethionine synthetase"/>
    <property type="match status" value="3"/>
</dbReference>
<dbReference type="PROSITE" id="PS00376">
    <property type="entry name" value="ADOMET_SYNTHASE_1"/>
    <property type="match status" value="1"/>
</dbReference>
<dbReference type="PROSITE" id="PS00377">
    <property type="entry name" value="ADOMET_SYNTHASE_2"/>
    <property type="match status" value="1"/>
</dbReference>
<accession>P9WGV0</accession>
<accession>L0T6I5</accession>
<accession>P77899</accession>
<keyword id="KW-0067">ATP-binding</keyword>
<keyword id="KW-0963">Cytoplasm</keyword>
<keyword id="KW-0460">Magnesium</keyword>
<keyword id="KW-0479">Metal-binding</keyword>
<keyword id="KW-0547">Nucleotide-binding</keyword>
<keyword id="KW-0554">One-carbon metabolism</keyword>
<keyword id="KW-0630">Potassium</keyword>
<keyword id="KW-1185">Reference proteome</keyword>
<keyword id="KW-0808">Transferase</keyword>
<reference key="1">
    <citation type="journal article" date="2002" name="J. Bacteriol.">
        <title>Whole-genome comparison of Mycobacterium tuberculosis clinical and laboratory strains.</title>
        <authorList>
            <person name="Fleischmann R.D."/>
            <person name="Alland D."/>
            <person name="Eisen J.A."/>
            <person name="Carpenter L."/>
            <person name="White O."/>
            <person name="Peterson J.D."/>
            <person name="DeBoy R.T."/>
            <person name="Dodson R.J."/>
            <person name="Gwinn M.L."/>
            <person name="Haft D.H."/>
            <person name="Hickey E.K."/>
            <person name="Kolonay J.F."/>
            <person name="Nelson W.C."/>
            <person name="Umayam L.A."/>
            <person name="Ermolaeva M.D."/>
            <person name="Salzberg S.L."/>
            <person name="Delcher A."/>
            <person name="Utterback T.R."/>
            <person name="Weidman J.F."/>
            <person name="Khouri H.M."/>
            <person name="Gill J."/>
            <person name="Mikula A."/>
            <person name="Bishai W."/>
            <person name="Jacobs W.R. Jr."/>
            <person name="Venter J.C."/>
            <person name="Fraser C.M."/>
        </authorList>
    </citation>
    <scope>NUCLEOTIDE SEQUENCE [LARGE SCALE GENOMIC DNA]</scope>
    <source>
        <strain>CDC 1551 / Oshkosh</strain>
    </source>
</reference>
<protein>
    <recommendedName>
        <fullName evidence="1">S-adenosylmethionine synthase</fullName>
        <shortName evidence="1">AdoMet synthase</shortName>
        <ecNumber evidence="1">2.5.1.6</ecNumber>
    </recommendedName>
    <alternativeName>
        <fullName evidence="1">MAT</fullName>
    </alternativeName>
    <alternativeName>
        <fullName evidence="1">Methionine adenosyltransferase</fullName>
    </alternativeName>
</protein>
<evidence type="ECO:0000255" key="1">
    <source>
        <dbReference type="HAMAP-Rule" id="MF_00086"/>
    </source>
</evidence>
<evidence type="ECO:0000305" key="2"/>